<accession>A4SIG1</accession>
<evidence type="ECO:0000255" key="1">
    <source>
        <dbReference type="HAMAP-Rule" id="MF_01261"/>
    </source>
</evidence>
<dbReference type="EC" id="2.7.7.72" evidence="1"/>
<dbReference type="EC" id="3.1.3.-" evidence="1"/>
<dbReference type="EC" id="3.1.4.-" evidence="1"/>
<dbReference type="EMBL" id="CP000644">
    <property type="protein sequence ID" value="ABO88683.1"/>
    <property type="molecule type" value="Genomic_DNA"/>
</dbReference>
<dbReference type="RefSeq" id="WP_005313956.1">
    <property type="nucleotide sequence ID" value="NC_009348.1"/>
</dbReference>
<dbReference type="SMR" id="A4SIG1"/>
<dbReference type="STRING" id="29491.GCA_000820065_02974"/>
<dbReference type="KEGG" id="asa:ASA_0516"/>
<dbReference type="eggNOG" id="COG0617">
    <property type="taxonomic scope" value="Bacteria"/>
</dbReference>
<dbReference type="HOGENOM" id="CLU_015961_1_1_6"/>
<dbReference type="Proteomes" id="UP000000225">
    <property type="component" value="Chromosome"/>
</dbReference>
<dbReference type="GO" id="GO:0005524">
    <property type="term" value="F:ATP binding"/>
    <property type="evidence" value="ECO:0007669"/>
    <property type="project" value="UniProtKB-UniRule"/>
</dbReference>
<dbReference type="GO" id="GO:0004810">
    <property type="term" value="F:CCA tRNA nucleotidyltransferase activity"/>
    <property type="evidence" value="ECO:0007669"/>
    <property type="project" value="UniProtKB-UniRule"/>
</dbReference>
<dbReference type="GO" id="GO:0004112">
    <property type="term" value="F:cyclic-nucleotide phosphodiesterase activity"/>
    <property type="evidence" value="ECO:0007669"/>
    <property type="project" value="UniProtKB-UniRule"/>
</dbReference>
<dbReference type="GO" id="GO:0000287">
    <property type="term" value="F:magnesium ion binding"/>
    <property type="evidence" value="ECO:0007669"/>
    <property type="project" value="UniProtKB-UniRule"/>
</dbReference>
<dbReference type="GO" id="GO:0016791">
    <property type="term" value="F:phosphatase activity"/>
    <property type="evidence" value="ECO:0007669"/>
    <property type="project" value="UniProtKB-UniRule"/>
</dbReference>
<dbReference type="GO" id="GO:0000049">
    <property type="term" value="F:tRNA binding"/>
    <property type="evidence" value="ECO:0007669"/>
    <property type="project" value="UniProtKB-UniRule"/>
</dbReference>
<dbReference type="GO" id="GO:0042245">
    <property type="term" value="P:RNA repair"/>
    <property type="evidence" value="ECO:0007669"/>
    <property type="project" value="UniProtKB-KW"/>
</dbReference>
<dbReference type="GO" id="GO:0001680">
    <property type="term" value="P:tRNA 3'-terminal CCA addition"/>
    <property type="evidence" value="ECO:0007669"/>
    <property type="project" value="UniProtKB-UniRule"/>
</dbReference>
<dbReference type="CDD" id="cd00077">
    <property type="entry name" value="HDc"/>
    <property type="match status" value="1"/>
</dbReference>
<dbReference type="CDD" id="cd05398">
    <property type="entry name" value="NT_ClassII-CCAase"/>
    <property type="match status" value="1"/>
</dbReference>
<dbReference type="FunFam" id="1.10.3090.10:FF:000001">
    <property type="entry name" value="Multifunctional CCA protein"/>
    <property type="match status" value="1"/>
</dbReference>
<dbReference type="Gene3D" id="3.30.460.10">
    <property type="entry name" value="Beta Polymerase, domain 2"/>
    <property type="match status" value="1"/>
</dbReference>
<dbReference type="Gene3D" id="1.10.3090.10">
    <property type="entry name" value="cca-adding enzyme, domain 2"/>
    <property type="match status" value="1"/>
</dbReference>
<dbReference type="HAMAP" id="MF_01261">
    <property type="entry name" value="CCA_bact_type1"/>
    <property type="match status" value="1"/>
</dbReference>
<dbReference type="HAMAP" id="MF_01262">
    <property type="entry name" value="CCA_bact_type2"/>
    <property type="match status" value="1"/>
</dbReference>
<dbReference type="InterPro" id="IPR012006">
    <property type="entry name" value="CCA_bact"/>
</dbReference>
<dbReference type="InterPro" id="IPR003607">
    <property type="entry name" value="HD/PDEase_dom"/>
</dbReference>
<dbReference type="InterPro" id="IPR006674">
    <property type="entry name" value="HD_domain"/>
</dbReference>
<dbReference type="InterPro" id="IPR043519">
    <property type="entry name" value="NT_sf"/>
</dbReference>
<dbReference type="InterPro" id="IPR002646">
    <property type="entry name" value="PolA_pol_head_dom"/>
</dbReference>
<dbReference type="InterPro" id="IPR032828">
    <property type="entry name" value="PolyA_RNA-bd"/>
</dbReference>
<dbReference type="InterPro" id="IPR050124">
    <property type="entry name" value="tRNA_CCA-adding_enzyme"/>
</dbReference>
<dbReference type="NCBIfam" id="NF008137">
    <property type="entry name" value="PRK10885.1"/>
    <property type="match status" value="1"/>
</dbReference>
<dbReference type="PANTHER" id="PTHR47545">
    <property type="entry name" value="MULTIFUNCTIONAL CCA PROTEIN"/>
    <property type="match status" value="1"/>
</dbReference>
<dbReference type="PANTHER" id="PTHR47545:SF1">
    <property type="entry name" value="MULTIFUNCTIONAL CCA PROTEIN"/>
    <property type="match status" value="1"/>
</dbReference>
<dbReference type="Pfam" id="PF01966">
    <property type="entry name" value="HD"/>
    <property type="match status" value="1"/>
</dbReference>
<dbReference type="Pfam" id="PF01743">
    <property type="entry name" value="PolyA_pol"/>
    <property type="match status" value="1"/>
</dbReference>
<dbReference type="Pfam" id="PF12627">
    <property type="entry name" value="PolyA_pol_RNAbd"/>
    <property type="match status" value="1"/>
</dbReference>
<dbReference type="PIRSF" id="PIRSF000813">
    <property type="entry name" value="CCA_bact"/>
    <property type="match status" value="1"/>
</dbReference>
<dbReference type="SMART" id="SM00471">
    <property type="entry name" value="HDc"/>
    <property type="match status" value="1"/>
</dbReference>
<dbReference type="SUPFAM" id="SSF81301">
    <property type="entry name" value="Nucleotidyltransferase"/>
    <property type="match status" value="1"/>
</dbReference>
<dbReference type="SUPFAM" id="SSF81891">
    <property type="entry name" value="Poly A polymerase C-terminal region-like"/>
    <property type="match status" value="1"/>
</dbReference>
<dbReference type="PROSITE" id="PS51831">
    <property type="entry name" value="HD"/>
    <property type="match status" value="1"/>
</dbReference>
<keyword id="KW-0067">ATP-binding</keyword>
<keyword id="KW-0378">Hydrolase</keyword>
<keyword id="KW-0460">Magnesium</keyword>
<keyword id="KW-0479">Metal-binding</keyword>
<keyword id="KW-0511">Multifunctional enzyme</keyword>
<keyword id="KW-0533">Nickel</keyword>
<keyword id="KW-0547">Nucleotide-binding</keyword>
<keyword id="KW-0548">Nucleotidyltransferase</keyword>
<keyword id="KW-0692">RNA repair</keyword>
<keyword id="KW-0694">RNA-binding</keyword>
<keyword id="KW-0808">Transferase</keyword>
<keyword id="KW-0819">tRNA processing</keyword>
<proteinExistence type="inferred from homology"/>
<protein>
    <recommendedName>
        <fullName evidence="1">Multifunctional CCA protein</fullName>
    </recommendedName>
    <domain>
        <recommendedName>
            <fullName evidence="1">CCA-adding enzyme</fullName>
            <ecNumber evidence="1">2.7.7.72</ecNumber>
        </recommendedName>
        <alternativeName>
            <fullName evidence="1">CCA tRNA nucleotidyltransferase</fullName>
        </alternativeName>
        <alternativeName>
            <fullName evidence="1">tRNA CCA-pyrophosphorylase</fullName>
        </alternativeName>
        <alternativeName>
            <fullName evidence="1">tRNA adenylyl-/cytidylyl-transferase</fullName>
        </alternativeName>
        <alternativeName>
            <fullName evidence="1">tRNA nucleotidyltransferase</fullName>
        </alternativeName>
        <alternativeName>
            <fullName evidence="1">tRNA-NT</fullName>
        </alternativeName>
    </domain>
    <domain>
        <recommendedName>
            <fullName evidence="1">2'-nucleotidase</fullName>
            <ecNumber evidence="1">3.1.3.-</ecNumber>
        </recommendedName>
    </domain>
    <domain>
        <recommendedName>
            <fullName evidence="1">2',3'-cyclic phosphodiesterase</fullName>
            <ecNumber evidence="1">3.1.4.-</ecNumber>
        </recommendedName>
    </domain>
    <domain>
        <recommendedName>
            <fullName evidence="1">Phosphatase</fullName>
            <ecNumber evidence="1">3.1.3.-</ecNumber>
        </recommendedName>
    </domain>
</protein>
<sequence length="413" mass="46484">MQTYLVGGAVRDRLLGLPQGDRDHLVVGATVEQMLALGFSQVGRDFPVFLHPKTQQEYALARTERKQGRGYTGFVCHASPEVTLEQDLLRRDLTINAIAEDEEGRLHDPYGGIQDLEQRMLRHVSPAFAEDPLRILRVARFAARFHAQGFVVAPETLALMREMTDAGELAHLTPERVWKELEKVLLGQTPQVFFEVLRECGALKALFPELDALFGVPAPAKWHPEIDTGIHTLMVLAQACRLSPELAVRFAALCHDFGKGLTPPAFWPSHHGHGQKGLPLIRDFCERFRVPNDCRDLALLVSDLHTHIHIAFELKPATLLKVFDKADAWRRPERFAQLLDACRADFHGRTGFEERVYAEPDYVAQALGAAQAVPVKDIVAAGFKGEAIREQLAKRRFDAISRVRDEWTFIDEE</sequence>
<name>CCA_AERS4</name>
<reference key="1">
    <citation type="journal article" date="2008" name="BMC Genomics">
        <title>The genome of Aeromonas salmonicida subsp. salmonicida A449: insights into the evolution of a fish pathogen.</title>
        <authorList>
            <person name="Reith M.E."/>
            <person name="Singh R.K."/>
            <person name="Curtis B."/>
            <person name="Boyd J.M."/>
            <person name="Bouevitch A."/>
            <person name="Kimball J."/>
            <person name="Munholland J."/>
            <person name="Murphy C."/>
            <person name="Sarty D."/>
            <person name="Williams J."/>
            <person name="Nash J.H."/>
            <person name="Johnson S.C."/>
            <person name="Brown L.L."/>
        </authorList>
    </citation>
    <scope>NUCLEOTIDE SEQUENCE [LARGE SCALE GENOMIC DNA]</scope>
    <source>
        <strain>A449</strain>
    </source>
</reference>
<gene>
    <name evidence="1" type="primary">cca</name>
    <name type="ordered locus">ASA_0516</name>
</gene>
<organism>
    <name type="scientific">Aeromonas salmonicida (strain A449)</name>
    <dbReference type="NCBI Taxonomy" id="382245"/>
    <lineage>
        <taxon>Bacteria</taxon>
        <taxon>Pseudomonadati</taxon>
        <taxon>Pseudomonadota</taxon>
        <taxon>Gammaproteobacteria</taxon>
        <taxon>Aeromonadales</taxon>
        <taxon>Aeromonadaceae</taxon>
        <taxon>Aeromonas</taxon>
    </lineage>
</organism>
<comment type="function">
    <text evidence="1">Catalyzes the addition and repair of the essential 3'-terminal CCA sequence in tRNAs without using a nucleic acid template. Adds these three nucleotides in the order of C, C, and A to the tRNA nucleotide-73, using CTP and ATP as substrates and producing inorganic pyrophosphate. tRNA 3'-terminal CCA addition is required both for tRNA processing and repair. Also involved in tRNA surveillance by mediating tandem CCA addition to generate a CCACCA at the 3' terminus of unstable tRNAs. While stable tRNAs receive only 3'-terminal CCA, unstable tRNAs are marked with CCACCA and rapidly degraded.</text>
</comment>
<comment type="catalytic activity">
    <reaction evidence="1">
        <text>a tRNA precursor + 2 CTP + ATP = a tRNA with a 3' CCA end + 3 diphosphate</text>
        <dbReference type="Rhea" id="RHEA:14433"/>
        <dbReference type="Rhea" id="RHEA-COMP:10465"/>
        <dbReference type="Rhea" id="RHEA-COMP:10468"/>
        <dbReference type="ChEBI" id="CHEBI:30616"/>
        <dbReference type="ChEBI" id="CHEBI:33019"/>
        <dbReference type="ChEBI" id="CHEBI:37563"/>
        <dbReference type="ChEBI" id="CHEBI:74896"/>
        <dbReference type="ChEBI" id="CHEBI:83071"/>
        <dbReference type="EC" id="2.7.7.72"/>
    </reaction>
</comment>
<comment type="catalytic activity">
    <reaction evidence="1">
        <text>a tRNA with a 3' CCA end + 2 CTP + ATP = a tRNA with a 3' CCACCA end + 3 diphosphate</text>
        <dbReference type="Rhea" id="RHEA:76235"/>
        <dbReference type="Rhea" id="RHEA-COMP:10468"/>
        <dbReference type="Rhea" id="RHEA-COMP:18655"/>
        <dbReference type="ChEBI" id="CHEBI:30616"/>
        <dbReference type="ChEBI" id="CHEBI:33019"/>
        <dbReference type="ChEBI" id="CHEBI:37563"/>
        <dbReference type="ChEBI" id="CHEBI:83071"/>
        <dbReference type="ChEBI" id="CHEBI:195187"/>
    </reaction>
    <physiologicalReaction direction="left-to-right" evidence="1">
        <dbReference type="Rhea" id="RHEA:76236"/>
    </physiologicalReaction>
</comment>
<comment type="cofactor">
    <cofactor evidence="1">
        <name>Mg(2+)</name>
        <dbReference type="ChEBI" id="CHEBI:18420"/>
    </cofactor>
    <text evidence="1">Magnesium is required for nucleotidyltransferase activity.</text>
</comment>
<comment type="cofactor">
    <cofactor evidence="1">
        <name>Ni(2+)</name>
        <dbReference type="ChEBI" id="CHEBI:49786"/>
    </cofactor>
    <text evidence="1">Nickel for phosphatase activity.</text>
</comment>
<comment type="subunit">
    <text evidence="1">Monomer. Can also form homodimers and oligomers.</text>
</comment>
<comment type="domain">
    <text evidence="1">Comprises two domains: an N-terminal domain containing the nucleotidyltransferase activity and a C-terminal HD domain associated with both phosphodiesterase and phosphatase activities.</text>
</comment>
<comment type="miscellaneous">
    <text evidence="1">A single active site specifically recognizes both ATP and CTP and is responsible for their addition.</text>
</comment>
<comment type="similarity">
    <text evidence="1">Belongs to the tRNA nucleotidyltransferase/poly(A) polymerase family. Bacterial CCA-adding enzyme type 1 subfamily.</text>
</comment>
<feature type="chain" id="PRO_1000054245" description="Multifunctional CCA protein">
    <location>
        <begin position="1"/>
        <end position="413"/>
    </location>
</feature>
<feature type="domain" description="HD" evidence="1">
    <location>
        <begin position="228"/>
        <end position="329"/>
    </location>
</feature>
<feature type="binding site" evidence="1">
    <location>
        <position position="8"/>
    </location>
    <ligand>
        <name>ATP</name>
        <dbReference type="ChEBI" id="CHEBI:30616"/>
    </ligand>
</feature>
<feature type="binding site" evidence="1">
    <location>
        <position position="8"/>
    </location>
    <ligand>
        <name>CTP</name>
        <dbReference type="ChEBI" id="CHEBI:37563"/>
    </ligand>
</feature>
<feature type="binding site" evidence="1">
    <location>
        <position position="11"/>
    </location>
    <ligand>
        <name>ATP</name>
        <dbReference type="ChEBI" id="CHEBI:30616"/>
    </ligand>
</feature>
<feature type="binding site" evidence="1">
    <location>
        <position position="11"/>
    </location>
    <ligand>
        <name>CTP</name>
        <dbReference type="ChEBI" id="CHEBI:37563"/>
    </ligand>
</feature>
<feature type="binding site" evidence="1">
    <location>
        <position position="21"/>
    </location>
    <ligand>
        <name>Mg(2+)</name>
        <dbReference type="ChEBI" id="CHEBI:18420"/>
    </ligand>
</feature>
<feature type="binding site" evidence="1">
    <location>
        <position position="23"/>
    </location>
    <ligand>
        <name>Mg(2+)</name>
        <dbReference type="ChEBI" id="CHEBI:18420"/>
    </ligand>
</feature>
<feature type="binding site" evidence="1">
    <location>
        <position position="91"/>
    </location>
    <ligand>
        <name>ATP</name>
        <dbReference type="ChEBI" id="CHEBI:30616"/>
    </ligand>
</feature>
<feature type="binding site" evidence="1">
    <location>
        <position position="91"/>
    </location>
    <ligand>
        <name>CTP</name>
        <dbReference type="ChEBI" id="CHEBI:37563"/>
    </ligand>
</feature>
<feature type="binding site" evidence="1">
    <location>
        <position position="137"/>
    </location>
    <ligand>
        <name>ATP</name>
        <dbReference type="ChEBI" id="CHEBI:30616"/>
    </ligand>
</feature>
<feature type="binding site" evidence="1">
    <location>
        <position position="137"/>
    </location>
    <ligand>
        <name>CTP</name>
        <dbReference type="ChEBI" id="CHEBI:37563"/>
    </ligand>
</feature>
<feature type="binding site" evidence="1">
    <location>
        <position position="140"/>
    </location>
    <ligand>
        <name>ATP</name>
        <dbReference type="ChEBI" id="CHEBI:30616"/>
    </ligand>
</feature>
<feature type="binding site" evidence="1">
    <location>
        <position position="140"/>
    </location>
    <ligand>
        <name>CTP</name>
        <dbReference type="ChEBI" id="CHEBI:37563"/>
    </ligand>
</feature>